<geneLocation type="chloroplast"/>
<reference key="1">
    <citation type="journal article" date="1990" name="J. Biol. Chem.">
        <title>Comparisons of rbcL genes for the large subunit of ribulose-bisphosphate carboxylase from closely related C3 and C4 plant species.</title>
        <authorList>
            <person name="Hudson G.S."/>
            <person name="Mahon J.D."/>
            <person name="Anderson P.A."/>
            <person name="Gibbs M.J."/>
            <person name="Badger M.R."/>
            <person name="Andrews T.J."/>
            <person name="Whitfeld P.R."/>
        </authorList>
    </citation>
    <scope>NUCLEOTIDE SEQUENCE [GENOMIC DNA]</scope>
</reference>
<keyword id="KW-0007">Acetylation</keyword>
<keyword id="KW-0113">Calvin cycle</keyword>
<keyword id="KW-0120">Carbon dioxide fixation</keyword>
<keyword id="KW-0150">Chloroplast</keyword>
<keyword id="KW-1015">Disulfide bond</keyword>
<keyword id="KW-0456">Lyase</keyword>
<keyword id="KW-0460">Magnesium</keyword>
<keyword id="KW-0479">Metal-binding</keyword>
<keyword id="KW-0488">Methylation</keyword>
<keyword id="KW-0503">Monooxygenase</keyword>
<keyword id="KW-0560">Oxidoreductase</keyword>
<keyword id="KW-0601">Photorespiration</keyword>
<keyword id="KW-0602">Photosynthesis</keyword>
<keyword id="KW-0934">Plastid</keyword>
<dbReference type="EC" id="4.1.1.39" evidence="1"/>
<dbReference type="EMBL" id="X55830">
    <property type="protein sequence ID" value="CAA39356.1"/>
    <property type="molecule type" value="Genomic_DNA"/>
</dbReference>
<dbReference type="PIR" id="D34921">
    <property type="entry name" value="RKFPLB"/>
</dbReference>
<dbReference type="SMR" id="P19161"/>
<dbReference type="GO" id="GO:0009507">
    <property type="term" value="C:chloroplast"/>
    <property type="evidence" value="ECO:0007669"/>
    <property type="project" value="UniProtKB-SubCell"/>
</dbReference>
<dbReference type="GO" id="GO:0000287">
    <property type="term" value="F:magnesium ion binding"/>
    <property type="evidence" value="ECO:0007669"/>
    <property type="project" value="UniProtKB-UniRule"/>
</dbReference>
<dbReference type="GO" id="GO:0004497">
    <property type="term" value="F:monooxygenase activity"/>
    <property type="evidence" value="ECO:0007669"/>
    <property type="project" value="UniProtKB-KW"/>
</dbReference>
<dbReference type="GO" id="GO:0016984">
    <property type="term" value="F:ribulose-bisphosphate carboxylase activity"/>
    <property type="evidence" value="ECO:0007669"/>
    <property type="project" value="UniProtKB-UniRule"/>
</dbReference>
<dbReference type="GO" id="GO:0009853">
    <property type="term" value="P:photorespiration"/>
    <property type="evidence" value="ECO:0007669"/>
    <property type="project" value="UniProtKB-KW"/>
</dbReference>
<dbReference type="GO" id="GO:0019253">
    <property type="term" value="P:reductive pentose-phosphate cycle"/>
    <property type="evidence" value="ECO:0007669"/>
    <property type="project" value="UniProtKB-UniRule"/>
</dbReference>
<dbReference type="CDD" id="cd08212">
    <property type="entry name" value="RuBisCO_large_I"/>
    <property type="match status" value="1"/>
</dbReference>
<dbReference type="FunFam" id="3.20.20.110:FF:000001">
    <property type="entry name" value="Ribulose bisphosphate carboxylase large chain"/>
    <property type="match status" value="1"/>
</dbReference>
<dbReference type="FunFam" id="3.30.70.150:FF:000001">
    <property type="entry name" value="Ribulose bisphosphate carboxylase large chain"/>
    <property type="match status" value="1"/>
</dbReference>
<dbReference type="Gene3D" id="3.20.20.110">
    <property type="entry name" value="Ribulose bisphosphate carboxylase, large subunit, C-terminal domain"/>
    <property type="match status" value="1"/>
</dbReference>
<dbReference type="Gene3D" id="3.30.70.150">
    <property type="entry name" value="RuBisCO large subunit, N-terminal domain"/>
    <property type="match status" value="1"/>
</dbReference>
<dbReference type="HAMAP" id="MF_01338">
    <property type="entry name" value="RuBisCO_L_type1"/>
    <property type="match status" value="1"/>
</dbReference>
<dbReference type="InterPro" id="IPR033966">
    <property type="entry name" value="RuBisCO"/>
</dbReference>
<dbReference type="InterPro" id="IPR020878">
    <property type="entry name" value="RuBisCo_large_chain_AS"/>
</dbReference>
<dbReference type="InterPro" id="IPR000685">
    <property type="entry name" value="RuBisCO_lsu_C"/>
</dbReference>
<dbReference type="InterPro" id="IPR036376">
    <property type="entry name" value="RuBisCO_lsu_C_sf"/>
</dbReference>
<dbReference type="InterPro" id="IPR017443">
    <property type="entry name" value="RuBisCO_lsu_fd_N"/>
</dbReference>
<dbReference type="InterPro" id="IPR036422">
    <property type="entry name" value="RuBisCO_lsu_N_sf"/>
</dbReference>
<dbReference type="InterPro" id="IPR020888">
    <property type="entry name" value="RuBisCO_lsuI"/>
</dbReference>
<dbReference type="NCBIfam" id="NF003252">
    <property type="entry name" value="PRK04208.1"/>
    <property type="match status" value="1"/>
</dbReference>
<dbReference type="PANTHER" id="PTHR42704">
    <property type="entry name" value="RIBULOSE BISPHOSPHATE CARBOXYLASE"/>
    <property type="match status" value="1"/>
</dbReference>
<dbReference type="PANTHER" id="PTHR42704:SF15">
    <property type="entry name" value="RIBULOSE BISPHOSPHATE CARBOXYLASE LARGE CHAIN"/>
    <property type="match status" value="1"/>
</dbReference>
<dbReference type="Pfam" id="PF00016">
    <property type="entry name" value="RuBisCO_large"/>
    <property type="match status" value="1"/>
</dbReference>
<dbReference type="Pfam" id="PF02788">
    <property type="entry name" value="RuBisCO_large_N"/>
    <property type="match status" value="1"/>
</dbReference>
<dbReference type="SFLD" id="SFLDG01052">
    <property type="entry name" value="RuBisCO"/>
    <property type="match status" value="1"/>
</dbReference>
<dbReference type="SFLD" id="SFLDS00014">
    <property type="entry name" value="RuBisCO"/>
    <property type="match status" value="1"/>
</dbReference>
<dbReference type="SFLD" id="SFLDG00301">
    <property type="entry name" value="RuBisCO-like_proteins"/>
    <property type="match status" value="1"/>
</dbReference>
<dbReference type="SUPFAM" id="SSF51649">
    <property type="entry name" value="RuBisCo, C-terminal domain"/>
    <property type="match status" value="1"/>
</dbReference>
<dbReference type="SUPFAM" id="SSF54966">
    <property type="entry name" value="RuBisCO, large subunit, small (N-terminal) domain"/>
    <property type="match status" value="1"/>
</dbReference>
<dbReference type="PROSITE" id="PS00157">
    <property type="entry name" value="RUBISCO_LARGE"/>
    <property type="match status" value="1"/>
</dbReference>
<feature type="propeptide" id="PRO_0000031221" evidence="1">
    <location>
        <begin position="1"/>
        <end position="2"/>
    </location>
</feature>
<feature type="chain" id="PRO_0000031222" description="Ribulose bisphosphate carboxylase large chain">
    <location>
        <begin position="3"/>
        <end position="485"/>
    </location>
</feature>
<feature type="active site" description="Proton acceptor" evidence="1">
    <location>
        <position position="175"/>
    </location>
</feature>
<feature type="active site" description="Proton acceptor" evidence="1">
    <location>
        <position position="294"/>
    </location>
</feature>
<feature type="binding site" description="in homodimeric partner" evidence="1">
    <location>
        <position position="123"/>
    </location>
    <ligand>
        <name>substrate</name>
    </ligand>
</feature>
<feature type="binding site" evidence="1">
    <location>
        <position position="173"/>
    </location>
    <ligand>
        <name>substrate</name>
    </ligand>
</feature>
<feature type="binding site" evidence="1">
    <location>
        <position position="177"/>
    </location>
    <ligand>
        <name>substrate</name>
    </ligand>
</feature>
<feature type="binding site" description="via carbamate group" evidence="1">
    <location>
        <position position="201"/>
    </location>
    <ligand>
        <name>Mg(2+)</name>
        <dbReference type="ChEBI" id="CHEBI:18420"/>
    </ligand>
</feature>
<feature type="binding site" evidence="1">
    <location>
        <position position="203"/>
    </location>
    <ligand>
        <name>Mg(2+)</name>
        <dbReference type="ChEBI" id="CHEBI:18420"/>
    </ligand>
</feature>
<feature type="binding site" evidence="1">
    <location>
        <position position="204"/>
    </location>
    <ligand>
        <name>Mg(2+)</name>
        <dbReference type="ChEBI" id="CHEBI:18420"/>
    </ligand>
</feature>
<feature type="binding site" evidence="1">
    <location>
        <position position="295"/>
    </location>
    <ligand>
        <name>substrate</name>
    </ligand>
</feature>
<feature type="binding site" evidence="1">
    <location>
        <position position="327"/>
    </location>
    <ligand>
        <name>substrate</name>
    </ligand>
</feature>
<feature type="binding site" evidence="1">
    <location>
        <position position="379"/>
    </location>
    <ligand>
        <name>substrate</name>
    </ligand>
</feature>
<feature type="site" description="Transition state stabilizer" evidence="1">
    <location>
        <position position="334"/>
    </location>
</feature>
<feature type="modified residue" description="N-acetylproline" evidence="1">
    <location>
        <position position="3"/>
    </location>
</feature>
<feature type="modified residue" description="N6,N6,N6-trimethyllysine" evidence="1">
    <location>
        <position position="14"/>
    </location>
</feature>
<feature type="modified residue" description="N6-carboxylysine" evidence="1">
    <location>
        <position position="201"/>
    </location>
</feature>
<feature type="disulfide bond" description="Interchain; in linked form" evidence="1">
    <location>
        <position position="247"/>
    </location>
</feature>
<proteinExistence type="inferred from homology"/>
<comment type="function">
    <text evidence="1">RuBisCO catalyzes two reactions: the carboxylation of D-ribulose 1,5-bisphosphate, the primary event in carbon dioxide fixation, as well as the oxidative fragmentation of the pentose substrate in the photorespiration process. Both reactions occur simultaneously and in competition at the same active site.</text>
</comment>
<comment type="catalytic activity">
    <reaction evidence="1">
        <text>2 (2R)-3-phosphoglycerate + 2 H(+) = D-ribulose 1,5-bisphosphate + CO2 + H2O</text>
        <dbReference type="Rhea" id="RHEA:23124"/>
        <dbReference type="ChEBI" id="CHEBI:15377"/>
        <dbReference type="ChEBI" id="CHEBI:15378"/>
        <dbReference type="ChEBI" id="CHEBI:16526"/>
        <dbReference type="ChEBI" id="CHEBI:57870"/>
        <dbReference type="ChEBI" id="CHEBI:58272"/>
        <dbReference type="EC" id="4.1.1.39"/>
    </reaction>
</comment>
<comment type="catalytic activity">
    <reaction evidence="1">
        <text>D-ribulose 1,5-bisphosphate + O2 = 2-phosphoglycolate + (2R)-3-phosphoglycerate + 2 H(+)</text>
        <dbReference type="Rhea" id="RHEA:36631"/>
        <dbReference type="ChEBI" id="CHEBI:15378"/>
        <dbReference type="ChEBI" id="CHEBI:15379"/>
        <dbReference type="ChEBI" id="CHEBI:57870"/>
        <dbReference type="ChEBI" id="CHEBI:58033"/>
        <dbReference type="ChEBI" id="CHEBI:58272"/>
    </reaction>
</comment>
<comment type="cofactor">
    <cofactor evidence="1">
        <name>Mg(2+)</name>
        <dbReference type="ChEBI" id="CHEBI:18420"/>
    </cofactor>
    <text evidence="1">Binds 1 Mg(2+) ion per subunit.</text>
</comment>
<comment type="subunit">
    <text evidence="1">Heterohexadecamer of 8 large chains and 8 small chains; disulfide-linked. The disulfide link is formed within the large subunit homodimers.</text>
</comment>
<comment type="subcellular location">
    <subcellularLocation>
        <location>Plastid</location>
        <location>Chloroplast</location>
    </subcellularLocation>
</comment>
<comment type="PTM">
    <text evidence="1">The disulfide bond which can form in the large chain dimeric partners within the hexadecamer appears to be associated with oxidative stress and protein turnover.</text>
</comment>
<comment type="miscellaneous">
    <text evidence="1">The basic functional RuBisCO is composed of a large chain homodimer in a 'head-to-tail' conformation. In form I RuBisCO this homodimer is arranged in a barrel-like tetramer with the small subunits forming a tetrameric 'cap' on each end of the 'barrel'.</text>
</comment>
<comment type="similarity">
    <text evidence="1">Belongs to the RuBisCO large chain family. Type I subfamily.</text>
</comment>
<gene>
    <name evidence="1" type="primary">rbcL</name>
</gene>
<name>RBL_FLABI</name>
<evidence type="ECO:0000255" key="1">
    <source>
        <dbReference type="HAMAP-Rule" id="MF_01338"/>
    </source>
</evidence>
<sequence>MSPQTETKASVGFKAGVKDYKLTYYTPEYETKDTDILAAFRVTPQPGVPPEEAGAAVAAESSTGTWTTVWTDGLTSLDRYKGRCYGIEPVPGEDNQYIAYVAYPLDLFEEGSVTNMFTSIVGNVFGFKALRALRLEDLRIPTAYVKTFAGPPHGIQVERDKLNKYGRPLLGCTIKPKLGLSAKNYGRACYECLRGGLDFTKDDENVNSQPFMRWRDRFLFCAEAIYKAQAETGEIKGHYLNATAGTCEEMLKRAVFARELGVPIIMHDYLTGGFTANTSLSHYCRDNGLLLHIHRAMHAVIDRQKNHGIHFRVLAKALRMSGGDHIHSGTVVGKLEGEREITLGFVDLLRDDFIEKDRSRGIYFTQDWVSLPGVLPVASGGIHVWHMPALTEIFGDDSVLQFGGGTLGHPWGNAPGAVANRVALEACVQARNEGRDLATEGNEIIREATKWSPELAAACEVWKEIKFEFQAMDTLDTDKDKDKKR</sequence>
<protein>
    <recommendedName>
        <fullName evidence="1">Ribulose bisphosphate carboxylase large chain</fullName>
        <shortName evidence="1">RuBisCO large subunit</shortName>
        <ecNumber evidence="1">4.1.1.39</ecNumber>
    </recommendedName>
</protein>
<organism>
    <name type="scientific">Flaveria bidentis</name>
    <name type="common">Coastal plain yellowtops</name>
    <name type="synonym">Ethulia bidentis</name>
    <dbReference type="NCBI Taxonomy" id="4224"/>
    <lineage>
        <taxon>Eukaryota</taxon>
        <taxon>Viridiplantae</taxon>
        <taxon>Streptophyta</taxon>
        <taxon>Embryophyta</taxon>
        <taxon>Tracheophyta</taxon>
        <taxon>Spermatophyta</taxon>
        <taxon>Magnoliopsida</taxon>
        <taxon>eudicotyledons</taxon>
        <taxon>Gunneridae</taxon>
        <taxon>Pentapetalae</taxon>
        <taxon>asterids</taxon>
        <taxon>campanulids</taxon>
        <taxon>Asterales</taxon>
        <taxon>Asteraceae</taxon>
        <taxon>Asteroideae</taxon>
        <taxon>Heliantheae alliance</taxon>
        <taxon>Tageteae</taxon>
        <taxon>Flaveria</taxon>
    </lineage>
</organism>
<accession>P19161</accession>